<sequence>MSGDMEAKIWGSTQISVKEFCYEWTISNFSFCMGGIRRKIKSPVFSLVANEEVAWCLRVHPNGFDEESKDYLSVYLVLVNCPKRQVRAKFEFWIKNSQGEKYQYTQSLNVPSFQRKQNWGFSKFILRDSLLSHRNWLLPKDKLTLCCKVSIVGAILNMPGQNMIPAIKDPRHMLTDDLGKLWENPLFTDCSLLVAGHEIRAHKAILAARSPVFRAMFEHQMEERLANCFEIQELDFQVFKEMMDFIYTGKAPTLHSHSMACDVLAAAEKYGLEGLKVICEDSLCRNLSVENAAHTLIVADLHSTEQLKTRALHFIAVHASEVSKSSGWKSMVESHPHLVDERFHSLASAQSVFLESSFKCLKGF</sequence>
<accession>Q717B2</accession>
<accession>B2RUE5</accession>
<accession>E9QNP4</accession>
<evidence type="ECO:0000255" key="1">
    <source>
        <dbReference type="PROSITE-ProRule" id="PRU00037"/>
    </source>
</evidence>
<evidence type="ECO:0000255" key="2">
    <source>
        <dbReference type="PROSITE-ProRule" id="PRU00129"/>
    </source>
</evidence>
<evidence type="ECO:0000269" key="3">
    <source>
    </source>
</evidence>
<evidence type="ECO:0000305" key="4"/>
<evidence type="ECO:0000312" key="5">
    <source>
        <dbReference type="EMBL" id="AAQ11978.1"/>
    </source>
</evidence>
<name>TDPZ2_MOUSE</name>
<feature type="chain" id="PRO_0000191624" description="TD and POZ domain-containing protein 2">
    <location>
        <begin position="1"/>
        <end position="364"/>
    </location>
</feature>
<feature type="domain" description="MATH" evidence="2">
    <location>
        <begin position="19"/>
        <end position="149"/>
    </location>
</feature>
<feature type="domain" description="BTB" evidence="1">
    <location>
        <begin position="188"/>
        <end position="255"/>
    </location>
</feature>
<feature type="sequence conflict" description="In Ref. 1; AAQ11978 and 3; AAI41105." evidence="4" ref="1 3">
    <original>V</original>
    <variation>E</variation>
    <location>
        <position position="48"/>
    </location>
</feature>
<feature type="sequence conflict" description="In Ref. 1; AAQ11978 and 3; AAI41105." evidence="4" ref="1 3">
    <original>P</original>
    <variation>H</variation>
    <location>
        <position position="111"/>
    </location>
</feature>
<feature type="sequence conflict" description="In Ref. 1; AAQ11978 and 3; AAI41105." evidence="4" ref="1 3">
    <original>P</original>
    <variation>S</variation>
    <location>
        <position position="185"/>
    </location>
</feature>
<feature type="sequence conflict" description="In Ref. 1; AAQ11978 and 3; AAI41105." evidence="4" ref="1 3">
    <original>I</original>
    <variation>F</variation>
    <location>
        <position position="199"/>
    </location>
</feature>
<feature type="sequence conflict" description="In Ref. 1; AAQ11978 and 3; AAI41105." evidence="4" ref="1 3">
    <original>A</original>
    <variation>V</variation>
    <location>
        <position position="204"/>
    </location>
</feature>
<feature type="sequence conflict" description="In Ref. 3; AAI41105." evidence="4" ref="3">
    <original>C</original>
    <variation>Y</variation>
    <location>
        <position position="228"/>
    </location>
</feature>
<feature type="sequence conflict" description="In Ref. 1; AAQ11978 and 3; AAI41105." evidence="4" ref="1 3">
    <original>E</original>
    <variation>D</variation>
    <location>
        <position position="268"/>
    </location>
</feature>
<feature type="sequence conflict" description="In Ref. 1; AAQ11978 and 3; AAI41105." evidence="4" ref="1 3">
    <original>C</original>
    <variation>H</variation>
    <location>
        <position position="360"/>
    </location>
</feature>
<comment type="developmental stage">
    <text evidence="3">Not detected in any embryonic stages tested. Weakly expressed in adult testis.</text>
</comment>
<comment type="similarity">
    <text evidence="4">Belongs to the Tdpoz family.</text>
</comment>
<proteinExistence type="evidence at transcript level"/>
<gene>
    <name evidence="5" type="primary">Tdpoz2</name>
    <name type="synonym">Gm5773</name>
</gene>
<dbReference type="EMBL" id="AF545858">
    <property type="protein sequence ID" value="AAQ11978.1"/>
    <property type="molecule type" value="Genomic_DNA"/>
</dbReference>
<dbReference type="EMBL" id="AC130840">
    <property type="status" value="NOT_ANNOTATED_CDS"/>
    <property type="molecule type" value="Genomic_DNA"/>
</dbReference>
<dbReference type="EMBL" id="BC141104">
    <property type="protein sequence ID" value="AAI41105.1"/>
    <property type="molecule type" value="mRNA"/>
</dbReference>
<dbReference type="SMR" id="Q717B2"/>
<dbReference type="FunCoup" id="Q717B2">
    <property type="interactions" value="69"/>
</dbReference>
<dbReference type="STRING" id="10090.ENSMUSP00000088366"/>
<dbReference type="iPTMnet" id="Q717B2"/>
<dbReference type="PhosphoSitePlus" id="Q717B2"/>
<dbReference type="PaxDb" id="10090-ENSMUSP00000088366"/>
<dbReference type="Ensembl" id="ENSMUST00000090853.5">
    <property type="protein sequence ID" value="ENSMUSP00000088366.4"/>
    <property type="gene ID" value="ENSMUSG00000068879.5"/>
</dbReference>
<dbReference type="AGR" id="MGI:3027902"/>
<dbReference type="MGI" id="MGI:3027902">
    <property type="gene designation" value="Tdpoz2"/>
</dbReference>
<dbReference type="VEuPathDB" id="HostDB:ENSMUSG00000068879"/>
<dbReference type="eggNOG" id="KOG1987">
    <property type="taxonomic scope" value="Eukaryota"/>
</dbReference>
<dbReference type="GeneTree" id="ENSGT00940000154376"/>
<dbReference type="HOGENOM" id="CLU_004253_2_0_1"/>
<dbReference type="InParanoid" id="Q717B2"/>
<dbReference type="OMA" id="ETHANEF"/>
<dbReference type="OrthoDB" id="9620072at2759"/>
<dbReference type="PhylomeDB" id="Q717B2"/>
<dbReference type="TreeFam" id="TF313419"/>
<dbReference type="PRO" id="PR:Q717B2"/>
<dbReference type="Proteomes" id="UP000000589">
    <property type="component" value="Chromosome 3"/>
</dbReference>
<dbReference type="RNAct" id="Q717B2">
    <property type="molecule type" value="protein"/>
</dbReference>
<dbReference type="Bgee" id="ENSMUSG00000068879">
    <property type="expression patterns" value="Expressed in blastoderm cell in morula"/>
</dbReference>
<dbReference type="GO" id="GO:0030163">
    <property type="term" value="P:protein catabolic process"/>
    <property type="evidence" value="ECO:0007669"/>
    <property type="project" value="UniProtKB-ARBA"/>
</dbReference>
<dbReference type="CDD" id="cd18521">
    <property type="entry name" value="BACK_Tdpoz"/>
    <property type="match status" value="1"/>
</dbReference>
<dbReference type="CDD" id="cd18344">
    <property type="entry name" value="BTB_POZ_TDPOZ"/>
    <property type="match status" value="1"/>
</dbReference>
<dbReference type="FunFam" id="3.30.710.10:FF:000147">
    <property type="entry name" value="Predicted gene 4858"/>
    <property type="match status" value="1"/>
</dbReference>
<dbReference type="FunFam" id="2.60.210.10:FF:000003">
    <property type="entry name" value="Speckle-type POZ protein-like a"/>
    <property type="match status" value="1"/>
</dbReference>
<dbReference type="Gene3D" id="6.10.250.3030">
    <property type="match status" value="1"/>
</dbReference>
<dbReference type="Gene3D" id="6.20.250.50">
    <property type="match status" value="1"/>
</dbReference>
<dbReference type="Gene3D" id="2.60.210.10">
    <property type="entry name" value="Apoptosis, Tumor Necrosis Factor Receptor Associated Protein 2, Chain A"/>
    <property type="match status" value="1"/>
</dbReference>
<dbReference type="Gene3D" id="3.30.710.10">
    <property type="entry name" value="Potassium Channel Kv1.1, Chain A"/>
    <property type="match status" value="1"/>
</dbReference>
<dbReference type="InterPro" id="IPR000210">
    <property type="entry name" value="BTB/POZ_dom"/>
</dbReference>
<dbReference type="InterPro" id="IPR002083">
    <property type="entry name" value="MATH/TRAF_dom"/>
</dbReference>
<dbReference type="InterPro" id="IPR011333">
    <property type="entry name" value="SKP1/BTB/POZ_sf"/>
</dbReference>
<dbReference type="InterPro" id="IPR008974">
    <property type="entry name" value="TRAF-like"/>
</dbReference>
<dbReference type="PANTHER" id="PTHR24413">
    <property type="entry name" value="SPECKLE-TYPE POZ PROTEIN"/>
    <property type="match status" value="1"/>
</dbReference>
<dbReference type="Pfam" id="PF00651">
    <property type="entry name" value="BTB"/>
    <property type="match status" value="1"/>
</dbReference>
<dbReference type="Pfam" id="PF22486">
    <property type="entry name" value="MATH_2"/>
    <property type="match status" value="1"/>
</dbReference>
<dbReference type="SMART" id="SM00225">
    <property type="entry name" value="BTB"/>
    <property type="match status" value="1"/>
</dbReference>
<dbReference type="SMART" id="SM00061">
    <property type="entry name" value="MATH"/>
    <property type="match status" value="1"/>
</dbReference>
<dbReference type="SUPFAM" id="SSF54695">
    <property type="entry name" value="POZ domain"/>
    <property type="match status" value="1"/>
</dbReference>
<dbReference type="SUPFAM" id="SSF49599">
    <property type="entry name" value="TRAF domain-like"/>
    <property type="match status" value="1"/>
</dbReference>
<dbReference type="PROSITE" id="PS50097">
    <property type="entry name" value="BTB"/>
    <property type="match status" value="1"/>
</dbReference>
<dbReference type="PROSITE" id="PS50144">
    <property type="entry name" value="MATH"/>
    <property type="match status" value="1"/>
</dbReference>
<organism>
    <name type="scientific">Mus musculus</name>
    <name type="common">Mouse</name>
    <dbReference type="NCBI Taxonomy" id="10090"/>
    <lineage>
        <taxon>Eukaryota</taxon>
        <taxon>Metazoa</taxon>
        <taxon>Chordata</taxon>
        <taxon>Craniata</taxon>
        <taxon>Vertebrata</taxon>
        <taxon>Euteleostomi</taxon>
        <taxon>Mammalia</taxon>
        <taxon>Eutheria</taxon>
        <taxon>Euarchontoglires</taxon>
        <taxon>Glires</taxon>
        <taxon>Rodentia</taxon>
        <taxon>Myomorpha</taxon>
        <taxon>Muroidea</taxon>
        <taxon>Muridae</taxon>
        <taxon>Murinae</taxon>
        <taxon>Mus</taxon>
        <taxon>Mus</taxon>
    </lineage>
</organism>
<protein>
    <recommendedName>
        <fullName>TD and POZ domain-containing protein 2</fullName>
    </recommendedName>
</protein>
<reference evidence="4 5" key="1">
    <citation type="journal article" date="2004" name="Gene">
        <title>TDPOZ, a family of bipartite animal and plant proteins that contain the TRAF (TD) and POZ/BTB domains.</title>
        <authorList>
            <person name="Huang C.-J."/>
            <person name="Chen C.-Y."/>
            <person name="Chen H.-H."/>
            <person name="Tsai S.-F."/>
            <person name="Choo K.-B."/>
        </authorList>
    </citation>
    <scope>NUCLEOTIDE SEQUENCE [GENOMIC DNA]</scope>
    <scope>DEVELOPMENTAL STAGE</scope>
    <source>
        <strain evidence="5">129/Sv</strain>
    </source>
</reference>
<reference key="2">
    <citation type="journal article" date="2009" name="PLoS Biol.">
        <title>Lineage-specific biology revealed by a finished genome assembly of the mouse.</title>
        <authorList>
            <person name="Church D.M."/>
            <person name="Goodstadt L."/>
            <person name="Hillier L.W."/>
            <person name="Zody M.C."/>
            <person name="Goldstein S."/>
            <person name="She X."/>
            <person name="Bult C.J."/>
            <person name="Agarwala R."/>
            <person name="Cherry J.L."/>
            <person name="DiCuccio M."/>
            <person name="Hlavina W."/>
            <person name="Kapustin Y."/>
            <person name="Meric P."/>
            <person name="Maglott D."/>
            <person name="Birtle Z."/>
            <person name="Marques A.C."/>
            <person name="Graves T."/>
            <person name="Zhou S."/>
            <person name="Teague B."/>
            <person name="Potamousis K."/>
            <person name="Churas C."/>
            <person name="Place M."/>
            <person name="Herschleb J."/>
            <person name="Runnheim R."/>
            <person name="Forrest D."/>
            <person name="Amos-Landgraf J."/>
            <person name="Schwartz D.C."/>
            <person name="Cheng Z."/>
            <person name="Lindblad-Toh K."/>
            <person name="Eichler E.E."/>
            <person name="Ponting C.P."/>
        </authorList>
    </citation>
    <scope>NUCLEOTIDE SEQUENCE [LARGE SCALE GENOMIC DNA]</scope>
    <source>
        <strain>C57BL/6J</strain>
    </source>
</reference>
<reference key="3">
    <citation type="journal article" date="2004" name="Genome Res.">
        <title>The status, quality, and expansion of the NIH full-length cDNA project: the Mammalian Gene Collection (MGC).</title>
        <authorList>
            <consortium name="The MGC Project Team"/>
        </authorList>
    </citation>
    <scope>NUCLEOTIDE SEQUENCE [LARGE SCALE MRNA]</scope>
</reference>
<keyword id="KW-1185">Reference proteome</keyword>